<sequence>MSSAVETVTKLVTPILEEQNFELVEVEFVKEGKNWFLRVFIDKEGGIDIEECAFVSEKLSEKLDAMDPDPIPQAYFLEVSSPGAERPLKKESDYEQAVGKYIHISLYQAVDGEKQIEGTLVHLDSEQLTLSVKIKTRVKEMTFERKNIAKARLAIQF</sequence>
<reference key="1">
    <citation type="journal article" date="2003" name="Science">
        <title>Role of mobile DNA in the evolution of vancomycin-resistant Enterococcus faecalis.</title>
        <authorList>
            <person name="Paulsen I.T."/>
            <person name="Banerjei L."/>
            <person name="Myers G.S.A."/>
            <person name="Nelson K.E."/>
            <person name="Seshadri R."/>
            <person name="Read T.D."/>
            <person name="Fouts D.E."/>
            <person name="Eisen J.A."/>
            <person name="Gill S.R."/>
            <person name="Heidelberg J.F."/>
            <person name="Tettelin H."/>
            <person name="Dodson R.J."/>
            <person name="Umayam L.A."/>
            <person name="Brinkac L.M."/>
            <person name="Beanan M.J."/>
            <person name="Daugherty S.C."/>
            <person name="DeBoy R.T."/>
            <person name="Durkin S.A."/>
            <person name="Kolonay J.F."/>
            <person name="Madupu R."/>
            <person name="Nelson W.C."/>
            <person name="Vamathevan J.J."/>
            <person name="Tran B."/>
            <person name="Upton J."/>
            <person name="Hansen T."/>
            <person name="Shetty J."/>
            <person name="Khouri H.M."/>
            <person name="Utterback T.R."/>
            <person name="Radune D."/>
            <person name="Ketchum K.A."/>
            <person name="Dougherty B.A."/>
            <person name="Fraser C.M."/>
        </authorList>
    </citation>
    <scope>NUCLEOTIDE SEQUENCE [LARGE SCALE GENOMIC DNA]</scope>
    <source>
        <strain>ATCC 700802 / V583</strain>
    </source>
</reference>
<dbReference type="EMBL" id="AE016830">
    <property type="protein sequence ID" value="AAO81063.1"/>
    <property type="molecule type" value="Genomic_DNA"/>
</dbReference>
<dbReference type="RefSeq" id="NP_814993.1">
    <property type="nucleotide sequence ID" value="NC_004668.1"/>
</dbReference>
<dbReference type="RefSeq" id="WP_002357863.1">
    <property type="nucleotide sequence ID" value="NZ_KE136528.1"/>
</dbReference>
<dbReference type="SMR" id="Q835V2"/>
<dbReference type="STRING" id="226185.EF_1270"/>
<dbReference type="EnsemblBacteria" id="AAO81063">
    <property type="protein sequence ID" value="AAO81063"/>
    <property type="gene ID" value="EF_1270"/>
</dbReference>
<dbReference type="GeneID" id="60893655"/>
<dbReference type="KEGG" id="efa:EF1270"/>
<dbReference type="PATRIC" id="fig|226185.45.peg.2232"/>
<dbReference type="eggNOG" id="COG0779">
    <property type="taxonomic scope" value="Bacteria"/>
</dbReference>
<dbReference type="HOGENOM" id="CLU_070525_2_0_9"/>
<dbReference type="Proteomes" id="UP000001415">
    <property type="component" value="Chromosome"/>
</dbReference>
<dbReference type="GO" id="GO:0005829">
    <property type="term" value="C:cytosol"/>
    <property type="evidence" value="ECO:0007669"/>
    <property type="project" value="TreeGrafter"/>
</dbReference>
<dbReference type="GO" id="GO:0000028">
    <property type="term" value="P:ribosomal small subunit assembly"/>
    <property type="evidence" value="ECO:0007669"/>
    <property type="project" value="TreeGrafter"/>
</dbReference>
<dbReference type="GO" id="GO:0006412">
    <property type="term" value="P:translation"/>
    <property type="evidence" value="ECO:0007669"/>
    <property type="project" value="TreeGrafter"/>
</dbReference>
<dbReference type="CDD" id="cd01734">
    <property type="entry name" value="YlxS_C"/>
    <property type="match status" value="1"/>
</dbReference>
<dbReference type="FunFam" id="3.30.300.70:FF:000001">
    <property type="entry name" value="Ribosome maturation factor RimP"/>
    <property type="match status" value="1"/>
</dbReference>
<dbReference type="Gene3D" id="2.30.30.180">
    <property type="entry name" value="Ribosome maturation factor RimP, C-terminal domain"/>
    <property type="match status" value="1"/>
</dbReference>
<dbReference type="Gene3D" id="3.30.300.70">
    <property type="entry name" value="RimP-like superfamily, N-terminal"/>
    <property type="match status" value="1"/>
</dbReference>
<dbReference type="HAMAP" id="MF_01077">
    <property type="entry name" value="RimP"/>
    <property type="match status" value="1"/>
</dbReference>
<dbReference type="InterPro" id="IPR003728">
    <property type="entry name" value="Ribosome_maturation_RimP"/>
</dbReference>
<dbReference type="InterPro" id="IPR028998">
    <property type="entry name" value="RimP_C"/>
</dbReference>
<dbReference type="InterPro" id="IPR036847">
    <property type="entry name" value="RimP_C_sf"/>
</dbReference>
<dbReference type="InterPro" id="IPR028989">
    <property type="entry name" value="RimP_N"/>
</dbReference>
<dbReference type="InterPro" id="IPR035956">
    <property type="entry name" value="RimP_N_sf"/>
</dbReference>
<dbReference type="NCBIfam" id="NF000928">
    <property type="entry name" value="PRK00092.1-2"/>
    <property type="match status" value="1"/>
</dbReference>
<dbReference type="PANTHER" id="PTHR33867">
    <property type="entry name" value="RIBOSOME MATURATION FACTOR RIMP"/>
    <property type="match status" value="1"/>
</dbReference>
<dbReference type="PANTHER" id="PTHR33867:SF1">
    <property type="entry name" value="RIBOSOME MATURATION FACTOR RIMP"/>
    <property type="match status" value="1"/>
</dbReference>
<dbReference type="Pfam" id="PF17384">
    <property type="entry name" value="DUF150_C"/>
    <property type="match status" value="1"/>
</dbReference>
<dbReference type="Pfam" id="PF02576">
    <property type="entry name" value="RimP_N"/>
    <property type="match status" value="1"/>
</dbReference>
<dbReference type="SUPFAM" id="SSF74942">
    <property type="entry name" value="YhbC-like, C-terminal domain"/>
    <property type="match status" value="1"/>
</dbReference>
<dbReference type="SUPFAM" id="SSF75420">
    <property type="entry name" value="YhbC-like, N-terminal domain"/>
    <property type="match status" value="1"/>
</dbReference>
<keyword id="KW-0963">Cytoplasm</keyword>
<keyword id="KW-1185">Reference proteome</keyword>
<keyword id="KW-0690">Ribosome biogenesis</keyword>
<name>RIMP_ENTFA</name>
<feature type="chain" id="PRO_0000181872" description="Ribosome maturation factor RimP">
    <location>
        <begin position="1"/>
        <end position="157"/>
    </location>
</feature>
<proteinExistence type="inferred from homology"/>
<organism>
    <name type="scientific">Enterococcus faecalis (strain ATCC 700802 / V583)</name>
    <dbReference type="NCBI Taxonomy" id="226185"/>
    <lineage>
        <taxon>Bacteria</taxon>
        <taxon>Bacillati</taxon>
        <taxon>Bacillota</taxon>
        <taxon>Bacilli</taxon>
        <taxon>Lactobacillales</taxon>
        <taxon>Enterococcaceae</taxon>
        <taxon>Enterococcus</taxon>
    </lineage>
</organism>
<gene>
    <name evidence="1" type="primary">rimP</name>
    <name type="ordered locus">EF_1270</name>
</gene>
<comment type="function">
    <text evidence="1">Required for maturation of 30S ribosomal subunits.</text>
</comment>
<comment type="subcellular location">
    <subcellularLocation>
        <location evidence="1">Cytoplasm</location>
    </subcellularLocation>
</comment>
<comment type="similarity">
    <text evidence="1">Belongs to the RimP family.</text>
</comment>
<accession>Q835V2</accession>
<evidence type="ECO:0000255" key="1">
    <source>
        <dbReference type="HAMAP-Rule" id="MF_01077"/>
    </source>
</evidence>
<protein>
    <recommendedName>
        <fullName evidence="1">Ribosome maturation factor RimP</fullName>
    </recommendedName>
</protein>